<protein>
    <recommendedName>
        <fullName evidence="1">Large ribosomal subunit protein uL11</fullName>
    </recommendedName>
    <alternativeName>
        <fullName evidence="2">50S ribosomal protein L11</fullName>
    </alternativeName>
</protein>
<proteinExistence type="evidence at protein level"/>
<name>RL11_THET2</name>
<dbReference type="EMBL" id="AE017221">
    <property type="protein sequence ID" value="AAS82080.1"/>
    <property type="molecule type" value="Genomic_DNA"/>
</dbReference>
<dbReference type="RefSeq" id="WP_011174097.1">
    <property type="nucleotide sequence ID" value="NC_005835.1"/>
</dbReference>
<dbReference type="PDB" id="4V9J">
    <property type="method" value="X-ray"/>
    <property type="resolution" value="3.86 A"/>
    <property type="chains" value="BK/DK=2-141"/>
</dbReference>
<dbReference type="PDB" id="4V9K">
    <property type="method" value="X-ray"/>
    <property type="resolution" value="3.50 A"/>
    <property type="chains" value="BK/DK=2-141"/>
</dbReference>
<dbReference type="PDB" id="4V9L">
    <property type="method" value="X-ray"/>
    <property type="resolution" value="3.50 A"/>
    <property type="chains" value="BK/DK=2-141"/>
</dbReference>
<dbReference type="PDB" id="4V9M">
    <property type="method" value="X-ray"/>
    <property type="resolution" value="4.00 A"/>
    <property type="chains" value="BK/DK=2-141"/>
</dbReference>
<dbReference type="PDB" id="4V9N">
    <property type="method" value="X-ray"/>
    <property type="resolution" value="3.40 A"/>
    <property type="chains" value="BK/DK=1-147"/>
</dbReference>
<dbReference type="PDB" id="4W29">
    <property type="method" value="X-ray"/>
    <property type="resolution" value="3.80 A"/>
    <property type="chains" value="BK/DK=2-141"/>
</dbReference>
<dbReference type="PDB" id="4XEJ">
    <property type="method" value="X-ray"/>
    <property type="resolution" value="3.80 A"/>
    <property type="chains" value="AL11/BL11=1-147"/>
</dbReference>
<dbReference type="PDBsum" id="4V9J"/>
<dbReference type="PDBsum" id="4V9K"/>
<dbReference type="PDBsum" id="4V9L"/>
<dbReference type="PDBsum" id="4V9M"/>
<dbReference type="PDBsum" id="4V9N"/>
<dbReference type="PDBsum" id="4W29"/>
<dbReference type="PDBsum" id="4XEJ"/>
<dbReference type="BMRB" id="P62442"/>
<dbReference type="SMR" id="P62442"/>
<dbReference type="IntAct" id="P62442">
    <property type="interactions" value="2"/>
</dbReference>
<dbReference type="GeneID" id="3168343"/>
<dbReference type="KEGG" id="tth:TT_C1738"/>
<dbReference type="eggNOG" id="COG0080">
    <property type="taxonomic scope" value="Bacteria"/>
</dbReference>
<dbReference type="HOGENOM" id="CLU_074237_2_0_0"/>
<dbReference type="OrthoDB" id="9802408at2"/>
<dbReference type="Proteomes" id="UP000000592">
    <property type="component" value="Chromosome"/>
</dbReference>
<dbReference type="GO" id="GO:0022625">
    <property type="term" value="C:cytosolic large ribosomal subunit"/>
    <property type="evidence" value="ECO:0007669"/>
    <property type="project" value="TreeGrafter"/>
</dbReference>
<dbReference type="GO" id="GO:0070180">
    <property type="term" value="F:large ribosomal subunit rRNA binding"/>
    <property type="evidence" value="ECO:0007669"/>
    <property type="project" value="UniProtKB-UniRule"/>
</dbReference>
<dbReference type="GO" id="GO:0003735">
    <property type="term" value="F:structural constituent of ribosome"/>
    <property type="evidence" value="ECO:0007669"/>
    <property type="project" value="InterPro"/>
</dbReference>
<dbReference type="GO" id="GO:0006412">
    <property type="term" value="P:translation"/>
    <property type="evidence" value="ECO:0007669"/>
    <property type="project" value="UniProtKB-UniRule"/>
</dbReference>
<dbReference type="CDD" id="cd00349">
    <property type="entry name" value="Ribosomal_L11"/>
    <property type="match status" value="1"/>
</dbReference>
<dbReference type="FunFam" id="1.10.10.250:FF:000001">
    <property type="entry name" value="50S ribosomal protein L11"/>
    <property type="match status" value="1"/>
</dbReference>
<dbReference type="FunFam" id="3.30.1550.10:FF:000001">
    <property type="entry name" value="50S ribosomal protein L11"/>
    <property type="match status" value="1"/>
</dbReference>
<dbReference type="Gene3D" id="1.10.10.250">
    <property type="entry name" value="Ribosomal protein L11, C-terminal domain"/>
    <property type="match status" value="1"/>
</dbReference>
<dbReference type="Gene3D" id="3.30.1550.10">
    <property type="entry name" value="Ribosomal protein L11/L12, N-terminal domain"/>
    <property type="match status" value="1"/>
</dbReference>
<dbReference type="HAMAP" id="MF_00736">
    <property type="entry name" value="Ribosomal_uL11"/>
    <property type="match status" value="1"/>
</dbReference>
<dbReference type="InterPro" id="IPR000911">
    <property type="entry name" value="Ribosomal_uL11"/>
</dbReference>
<dbReference type="InterPro" id="IPR006519">
    <property type="entry name" value="Ribosomal_uL11_bac-typ"/>
</dbReference>
<dbReference type="InterPro" id="IPR020783">
    <property type="entry name" value="Ribosomal_uL11_C"/>
</dbReference>
<dbReference type="InterPro" id="IPR036769">
    <property type="entry name" value="Ribosomal_uL11_C_sf"/>
</dbReference>
<dbReference type="InterPro" id="IPR020785">
    <property type="entry name" value="Ribosomal_uL11_CS"/>
</dbReference>
<dbReference type="InterPro" id="IPR020784">
    <property type="entry name" value="Ribosomal_uL11_N"/>
</dbReference>
<dbReference type="InterPro" id="IPR036796">
    <property type="entry name" value="Ribosomal_uL11_N_sf"/>
</dbReference>
<dbReference type="NCBIfam" id="TIGR01632">
    <property type="entry name" value="L11_bact"/>
    <property type="match status" value="1"/>
</dbReference>
<dbReference type="PANTHER" id="PTHR11661">
    <property type="entry name" value="60S RIBOSOMAL PROTEIN L12"/>
    <property type="match status" value="1"/>
</dbReference>
<dbReference type="PANTHER" id="PTHR11661:SF1">
    <property type="entry name" value="LARGE RIBOSOMAL SUBUNIT PROTEIN UL11M"/>
    <property type="match status" value="1"/>
</dbReference>
<dbReference type="Pfam" id="PF00298">
    <property type="entry name" value="Ribosomal_L11"/>
    <property type="match status" value="1"/>
</dbReference>
<dbReference type="Pfam" id="PF03946">
    <property type="entry name" value="Ribosomal_L11_N"/>
    <property type="match status" value="1"/>
</dbReference>
<dbReference type="SMART" id="SM00649">
    <property type="entry name" value="RL11"/>
    <property type="match status" value="1"/>
</dbReference>
<dbReference type="SUPFAM" id="SSF54747">
    <property type="entry name" value="Ribosomal L11/L12e N-terminal domain"/>
    <property type="match status" value="1"/>
</dbReference>
<dbReference type="SUPFAM" id="SSF46906">
    <property type="entry name" value="Ribosomal protein L11, C-terminal domain"/>
    <property type="match status" value="1"/>
</dbReference>
<dbReference type="PROSITE" id="PS00359">
    <property type="entry name" value="RIBOSOMAL_L11"/>
    <property type="match status" value="1"/>
</dbReference>
<sequence>MKKVVAVVKLQLPAGKATPAPPVGPALGQHGANIMEFVKAFNAATANMGDAIVPVEITIYADRSFTFVTKTPPASYLIRKAAGLEKGAHKPGREKVGRITWEQVLEIAKQKMPDLNTTDLEAAARMIAGSARSMGVEVVGAPEVKDA</sequence>
<gene>
    <name evidence="1" type="primary">rplK</name>
    <name type="ordered locus">TT_C1738</name>
</gene>
<organism>
    <name type="scientific">Thermus thermophilus (strain ATCC BAA-163 / DSM 7039 / HB27)</name>
    <dbReference type="NCBI Taxonomy" id="262724"/>
    <lineage>
        <taxon>Bacteria</taxon>
        <taxon>Thermotogati</taxon>
        <taxon>Deinococcota</taxon>
        <taxon>Deinococci</taxon>
        <taxon>Thermales</taxon>
        <taxon>Thermaceae</taxon>
        <taxon>Thermus</taxon>
    </lineage>
</organism>
<reference key="1">
    <citation type="journal article" date="2004" name="Nat. Biotechnol.">
        <title>The genome sequence of the extreme thermophile Thermus thermophilus.</title>
        <authorList>
            <person name="Henne A."/>
            <person name="Brueggemann H."/>
            <person name="Raasch C."/>
            <person name="Wiezer A."/>
            <person name="Hartsch T."/>
            <person name="Liesegang H."/>
            <person name="Johann A."/>
            <person name="Lienard T."/>
            <person name="Gohl O."/>
            <person name="Martinez-Arias R."/>
            <person name="Jacobi C."/>
            <person name="Starkuviene V."/>
            <person name="Schlenczeck S."/>
            <person name="Dencker S."/>
            <person name="Huber R."/>
            <person name="Klenk H.-P."/>
            <person name="Kramer W."/>
            <person name="Merkl R."/>
            <person name="Gottschalk G."/>
            <person name="Fritz H.-J."/>
        </authorList>
    </citation>
    <scope>NUCLEOTIDE SEQUENCE [LARGE SCALE GENOMIC DNA]</scope>
    <source>
        <strain>ATCC BAA-163 / DSM 7039 / HB27</strain>
    </source>
</reference>
<comment type="function">
    <text evidence="1">Forms part of the ribosomal stalk which helps the ribosome interact with GTP-bound translation factors.</text>
</comment>
<comment type="subunit">
    <text evidence="1">Part of the ribosomal stalk of the 50S ribosomal subunit. Interacts with L10 and the large rRNA to form the base of the stalk. L10 forms an elongated spine to which L12 dimers bind in a sequential fashion forming a multimeric L10(L12)X complex.</text>
</comment>
<comment type="PTM">
    <text evidence="1">One or more lysine residues are methylated.</text>
</comment>
<comment type="similarity">
    <text evidence="1">Belongs to the universal ribosomal protein uL11 family.</text>
</comment>
<accession>P62442</accession>
<evidence type="ECO:0000255" key="1">
    <source>
        <dbReference type="HAMAP-Rule" id="MF_00736"/>
    </source>
</evidence>
<evidence type="ECO:0000305" key="2"/>
<evidence type="ECO:0007829" key="3">
    <source>
        <dbReference type="PDB" id="4V9K"/>
    </source>
</evidence>
<evidence type="ECO:0007829" key="4">
    <source>
        <dbReference type="PDB" id="4V9L"/>
    </source>
</evidence>
<evidence type="ECO:0007829" key="5">
    <source>
        <dbReference type="PDB" id="4V9N"/>
    </source>
</evidence>
<keyword id="KW-0002">3D-structure</keyword>
<keyword id="KW-0488">Methylation</keyword>
<keyword id="KW-0687">Ribonucleoprotein</keyword>
<keyword id="KW-0689">Ribosomal protein</keyword>
<keyword id="KW-0694">RNA-binding</keyword>
<keyword id="KW-0699">rRNA-binding</keyword>
<feature type="chain" id="PRO_0000104398" description="Large ribosomal subunit protein uL11">
    <location>
        <begin position="1"/>
        <end position="147"/>
    </location>
</feature>
<feature type="strand" evidence="4">
    <location>
        <begin position="9"/>
        <end position="11"/>
    </location>
</feature>
<feature type="strand" evidence="5">
    <location>
        <begin position="13"/>
        <end position="15"/>
    </location>
</feature>
<feature type="helix" evidence="5">
    <location>
        <begin position="23"/>
        <end position="26"/>
    </location>
</feature>
<feature type="turn" evidence="3">
    <location>
        <begin position="28"/>
        <end position="31"/>
    </location>
</feature>
<feature type="turn" evidence="5">
    <location>
        <begin position="34"/>
        <end position="36"/>
    </location>
</feature>
<feature type="helix" evidence="5">
    <location>
        <begin position="38"/>
        <end position="40"/>
    </location>
</feature>
<feature type="strand" evidence="5">
    <location>
        <begin position="45"/>
        <end position="48"/>
    </location>
</feature>
<feature type="strand" evidence="3">
    <location>
        <begin position="55"/>
        <end position="57"/>
    </location>
</feature>
<feature type="strand" evidence="5">
    <location>
        <begin position="61"/>
        <end position="63"/>
    </location>
</feature>
<feature type="helix" evidence="5">
    <location>
        <begin position="74"/>
        <end position="76"/>
    </location>
</feature>
<feature type="helix" evidence="5">
    <location>
        <begin position="78"/>
        <end position="81"/>
    </location>
</feature>
<feature type="turn" evidence="5">
    <location>
        <begin position="91"/>
        <end position="93"/>
    </location>
</feature>
<feature type="strand" evidence="4">
    <location>
        <begin position="97"/>
        <end position="99"/>
    </location>
</feature>
<feature type="helix" evidence="5">
    <location>
        <begin position="103"/>
        <end position="106"/>
    </location>
</feature>
<feature type="helix" evidence="5">
    <location>
        <begin position="107"/>
        <end position="111"/>
    </location>
</feature>
<feature type="turn" evidence="5">
    <location>
        <begin position="112"/>
        <end position="114"/>
    </location>
</feature>
<feature type="strand" evidence="4">
    <location>
        <begin position="115"/>
        <end position="117"/>
    </location>
</feature>
<feature type="helix" evidence="5">
    <location>
        <begin position="122"/>
        <end position="132"/>
    </location>
</feature>
<feature type="turn" evidence="5">
    <location>
        <begin position="133"/>
        <end position="135"/>
    </location>
</feature>
<feature type="strand" evidence="5">
    <location>
        <begin position="141"/>
        <end position="143"/>
    </location>
</feature>